<protein>
    <recommendedName>
        <fullName evidence="11">Immunity-related GTPase family M protein 2</fullName>
        <ecNumber evidence="7">3.6.5.-</ecNumber>
    </recommendedName>
    <alternativeName>
        <fullName evidence="10">Interferon-inducible GTPase 2</fullName>
    </alternativeName>
</protein>
<comment type="function">
    <text evidence="1 4 5 6 7 8">Immunity-related GTPase that plays important roles in innate immunity and inflammatory response (PubMed:17641048, PubMed:33124745, PubMed:33124769, PubMed:34078740, PubMed:34338548). Acts as a dynamin-like protein that binds to intracellular membranes and promotes remodeling and trafficking of those membranes (By similarity). Required for clearance of acute protozoan and bacterial infections (PubMed:17641048, PubMed:34078740, PubMed:34338548). Acts by participating to Tgtp1/Irgb6 and Gbp1-mediated parasite killing by promoting their accumulation on the T.gondii parasitophorous vacuole membranes (PubMed:34078740). Also required for prolonged loading of ubiquitin and p62/Sqstm1 to parasitophorous vacuole membranes (PubMed:34078740). Also acts as a key negative regulator of the inflammatory response by inhibiting the non-canonical inflammasome, thereby protecting against Casp11-driven septic shock during endotoxemia (PubMed:33124745, PubMed:33124769).</text>
</comment>
<comment type="catalytic activity">
    <reaction evidence="7">
        <text>GTP + H2O = GDP + phosphate + H(+)</text>
        <dbReference type="Rhea" id="RHEA:19669"/>
        <dbReference type="ChEBI" id="CHEBI:15377"/>
        <dbReference type="ChEBI" id="CHEBI:15378"/>
        <dbReference type="ChEBI" id="CHEBI:37565"/>
        <dbReference type="ChEBI" id="CHEBI:43474"/>
        <dbReference type="ChEBI" id="CHEBI:58189"/>
    </reaction>
    <physiologicalReaction direction="left-to-right" evidence="7">
        <dbReference type="Rhea" id="RHEA:19670"/>
    </physiologicalReaction>
</comment>
<comment type="subcellular location">
    <subcellularLocation>
        <location evidence="7">Cytoplasmic vesicle membrane</location>
    </subcellularLocation>
    <subcellularLocation>
        <location evidence="7">Golgi apparatus membrane</location>
    </subcellularLocation>
    <subcellularLocation>
        <location evidence="7">Cytoplasm</location>
        <location evidence="7">Cytosol</location>
    </subcellularLocation>
    <text evidence="7">Localizes to parasitophorous vacuole membranes.</text>
</comment>
<comment type="PTM">
    <text evidence="7">Ubiquitinated; polyubiquitinated in the cytosol, promoting Gbp1 recruitment to the T.gondii parasitophorous vacuole membranes.</text>
</comment>
<comment type="disruption phenotype">
    <text evidence="5 7 8 9">Mice are highly susceptible to T.gondii infection, due to impaired ability to mediate clearance of acute protozoan infections (PubMed:34078740, PubMed:34338548). They also display strongly increased activation of the Casp11-dependent inflammatory responses when exposed to extracellular lipopolysaccharide (LPS), bacterial outer membrane vesicles or Gram-negative bacteria (PubMed:33124745). Mice lacking Irgm1, Irgm2 and Igtp/Irgm3 (panIrgm mice) show resistance against M.tuberculosis one month post-infection; then, panIrgm mice display higher bacterial burden and altered cytokine during late stage of infection, leading to increased mortality (PubMed:36629440).</text>
</comment>
<comment type="similarity">
    <text evidence="3">Belongs to the TRAFAC class dynamin-like GTPase superfamily. IRG family.</text>
</comment>
<evidence type="ECO:0000250" key="1">
    <source>
        <dbReference type="UniProtKB" id="Q60766"/>
    </source>
</evidence>
<evidence type="ECO:0000250" key="2">
    <source>
        <dbReference type="UniProtKB" id="Q9QZ85"/>
    </source>
</evidence>
<evidence type="ECO:0000255" key="3">
    <source>
        <dbReference type="PROSITE-ProRule" id="PRU01053"/>
    </source>
</evidence>
<evidence type="ECO:0000269" key="4">
    <source>
    </source>
</evidence>
<evidence type="ECO:0000269" key="5">
    <source>
    </source>
</evidence>
<evidence type="ECO:0000269" key="6">
    <source>
    </source>
</evidence>
<evidence type="ECO:0000269" key="7">
    <source>
    </source>
</evidence>
<evidence type="ECO:0000269" key="8">
    <source>
    </source>
</evidence>
<evidence type="ECO:0000269" key="9">
    <source>
    </source>
</evidence>
<evidence type="ECO:0000303" key="10">
    <source>
    </source>
</evidence>
<evidence type="ECO:0000305" key="11"/>
<evidence type="ECO:0000312" key="12">
    <source>
        <dbReference type="MGI" id="MGI:1926262"/>
    </source>
</evidence>
<name>IRGM2_MOUSE</name>
<gene>
    <name evidence="12" type="primary">Irgm2</name>
    <name evidence="10" type="synonym">Iigp2</name>
</gene>
<dbReference type="EC" id="3.6.5.-" evidence="7"/>
<dbReference type="EMBL" id="AJ007972">
    <property type="protein sequence ID" value="CAA07799.1"/>
    <property type="molecule type" value="mRNA"/>
</dbReference>
<dbReference type="EMBL" id="AK142291">
    <property type="protein sequence ID" value="BAE25015.1"/>
    <property type="molecule type" value="mRNA"/>
</dbReference>
<dbReference type="EMBL" id="AK152870">
    <property type="protein sequence ID" value="BAE31558.1"/>
    <property type="molecule type" value="mRNA"/>
</dbReference>
<dbReference type="EMBL" id="AK153309">
    <property type="protein sequence ID" value="BAE31890.1"/>
    <property type="molecule type" value="mRNA"/>
</dbReference>
<dbReference type="EMBL" id="AK165347">
    <property type="protein sequence ID" value="BAE38144.1"/>
    <property type="molecule type" value="mRNA"/>
</dbReference>
<dbReference type="EMBL" id="AK171724">
    <property type="protein sequence ID" value="BAE42632.1"/>
    <property type="molecule type" value="mRNA"/>
</dbReference>
<dbReference type="EMBL" id="FR734033">
    <property type="protein sequence ID" value="CBY65996.1"/>
    <property type="molecule type" value="Genomic_DNA"/>
</dbReference>
<dbReference type="CCDS" id="CCDS48803.1"/>
<dbReference type="RefSeq" id="NP_001423100.1">
    <property type="nucleotide sequence ID" value="NM_001436171.1"/>
</dbReference>
<dbReference type="RefSeq" id="NP_062313.3">
    <property type="nucleotide sequence ID" value="NM_019440.3"/>
</dbReference>
<dbReference type="SMR" id="A0A140LIF8"/>
<dbReference type="FunCoup" id="A0A140LIF8">
    <property type="interactions" value="10"/>
</dbReference>
<dbReference type="IntAct" id="A0A140LIF8">
    <property type="interactions" value="1"/>
</dbReference>
<dbReference type="STRING" id="10090.ENSMUSP00000056001"/>
<dbReference type="iPTMnet" id="A0A140LIF8"/>
<dbReference type="PhosphoSitePlus" id="A0A140LIF8"/>
<dbReference type="PaxDb" id="10090-ENSMUSP00000104464"/>
<dbReference type="ProteomicsDB" id="305743"/>
<dbReference type="ProteomicsDB" id="336818"/>
<dbReference type="DNASU" id="54396"/>
<dbReference type="Ensembl" id="ENSMUST00000058704.9">
    <property type="protein sequence ID" value="ENSMUSP00000056001.9"/>
    <property type="gene ID" value="ENSMUSG00000069874.8"/>
</dbReference>
<dbReference type="Ensembl" id="ENSMUST00000108836.2">
    <property type="protein sequence ID" value="ENSMUSP00000104464.2"/>
    <property type="gene ID" value="ENSMUSG00000069874.8"/>
</dbReference>
<dbReference type="GeneID" id="54396"/>
<dbReference type="KEGG" id="mmu:54396"/>
<dbReference type="AGR" id="MGI:1926262"/>
<dbReference type="CTD" id="54396"/>
<dbReference type="MGI" id="MGI:1926262">
    <property type="gene designation" value="Irgm2"/>
</dbReference>
<dbReference type="VEuPathDB" id="HostDB:ENSMUSG00000069874"/>
<dbReference type="eggNOG" id="ENOG502QS9R">
    <property type="taxonomic scope" value="Eukaryota"/>
</dbReference>
<dbReference type="GeneTree" id="ENSGT00950000183007"/>
<dbReference type="HOGENOM" id="CLU_015342_3_0_1"/>
<dbReference type="InParanoid" id="A0A140LIF8"/>
<dbReference type="OrthoDB" id="422720at2759"/>
<dbReference type="TreeFam" id="TF331897"/>
<dbReference type="BioGRID-ORCS" id="54396">
    <property type="hits" value="7 hits in 78 CRISPR screens"/>
</dbReference>
<dbReference type="ChiTaRS" id="Irgm2">
    <property type="organism name" value="mouse"/>
</dbReference>
<dbReference type="PRO" id="PR:A0A140LIF8"/>
<dbReference type="Proteomes" id="UP000000589">
    <property type="component" value="Chromosome 11"/>
</dbReference>
<dbReference type="RNAct" id="A0A140LIF8">
    <property type="molecule type" value="protein"/>
</dbReference>
<dbReference type="Bgee" id="ENSMUSG00000069874">
    <property type="expression patterns" value="Expressed in small intestine Peyer's patch and 189 other cell types or tissues"/>
</dbReference>
<dbReference type="ExpressionAtlas" id="A0A140LIF8">
    <property type="expression patterns" value="baseline and differential"/>
</dbReference>
<dbReference type="GO" id="GO:0030659">
    <property type="term" value="C:cytoplasmic vesicle membrane"/>
    <property type="evidence" value="ECO:0007669"/>
    <property type="project" value="UniProtKB-SubCell"/>
</dbReference>
<dbReference type="GO" id="GO:0005829">
    <property type="term" value="C:cytosol"/>
    <property type="evidence" value="ECO:0000314"/>
    <property type="project" value="UniProtKB"/>
</dbReference>
<dbReference type="GO" id="GO:0000139">
    <property type="term" value="C:Golgi membrane"/>
    <property type="evidence" value="ECO:0000314"/>
    <property type="project" value="UniProtKB"/>
</dbReference>
<dbReference type="GO" id="GO:0005774">
    <property type="term" value="C:vacuolar membrane"/>
    <property type="evidence" value="ECO:0000314"/>
    <property type="project" value="UniProtKB"/>
</dbReference>
<dbReference type="GO" id="GO:0005525">
    <property type="term" value="F:GTP binding"/>
    <property type="evidence" value="ECO:0007669"/>
    <property type="project" value="UniProtKB-KW"/>
</dbReference>
<dbReference type="GO" id="GO:0003924">
    <property type="term" value="F:GTPase activity"/>
    <property type="evidence" value="ECO:0000314"/>
    <property type="project" value="UniProtKB"/>
</dbReference>
<dbReference type="GO" id="GO:0042832">
    <property type="term" value="P:defense response to protozoan"/>
    <property type="evidence" value="ECO:0000314"/>
    <property type="project" value="UniProtKB"/>
</dbReference>
<dbReference type="GO" id="GO:0045087">
    <property type="term" value="P:innate immune response"/>
    <property type="evidence" value="ECO:0007669"/>
    <property type="project" value="UniProtKB-KW"/>
</dbReference>
<dbReference type="GO" id="GO:0031640">
    <property type="term" value="P:killing of cells of another organism"/>
    <property type="evidence" value="ECO:0000314"/>
    <property type="project" value="UniProtKB"/>
</dbReference>
<dbReference type="GO" id="GO:0160076">
    <property type="term" value="P:negative regulation of non-canonical inflammasome complex assembly"/>
    <property type="evidence" value="ECO:0000314"/>
    <property type="project" value="UniProtKB"/>
</dbReference>
<dbReference type="GO" id="GO:0044395">
    <property type="term" value="P:protein targeting to vacuolar membrane"/>
    <property type="evidence" value="ECO:0000314"/>
    <property type="project" value="UniProtKB"/>
</dbReference>
<dbReference type="GO" id="GO:0009617">
    <property type="term" value="P:response to bacterium"/>
    <property type="evidence" value="ECO:0000270"/>
    <property type="project" value="MGI"/>
</dbReference>
<dbReference type="FunFam" id="3.40.50.300:FF:000541">
    <property type="entry name" value="Immunity related GTPase M"/>
    <property type="match status" value="1"/>
</dbReference>
<dbReference type="Gene3D" id="3.40.50.300">
    <property type="entry name" value="P-loop containing nucleotide triphosphate hydrolases"/>
    <property type="match status" value="1"/>
</dbReference>
<dbReference type="InterPro" id="IPR030385">
    <property type="entry name" value="G_IRG_dom"/>
</dbReference>
<dbReference type="InterPro" id="IPR007743">
    <property type="entry name" value="Immunity-related_GTPase-like"/>
</dbReference>
<dbReference type="InterPro" id="IPR051515">
    <property type="entry name" value="IRG"/>
</dbReference>
<dbReference type="InterPro" id="IPR027417">
    <property type="entry name" value="P-loop_NTPase"/>
</dbReference>
<dbReference type="PANTHER" id="PTHR32341:SF6">
    <property type="entry name" value="IMMUNITY-RELATED GTPASE FAMILY M PROTEIN 2-RELATED"/>
    <property type="match status" value="1"/>
</dbReference>
<dbReference type="PANTHER" id="PTHR32341">
    <property type="entry name" value="INTERFERON-INDUCIBLE GTPASE"/>
    <property type="match status" value="1"/>
</dbReference>
<dbReference type="Pfam" id="PF05049">
    <property type="entry name" value="IIGP"/>
    <property type="match status" value="1"/>
</dbReference>
<dbReference type="SUPFAM" id="SSF52540">
    <property type="entry name" value="P-loop containing nucleoside triphosphate hydrolases"/>
    <property type="match status" value="1"/>
</dbReference>
<dbReference type="PROSITE" id="PS51716">
    <property type="entry name" value="G_IRG"/>
    <property type="match status" value="1"/>
</dbReference>
<feature type="chain" id="PRO_0000457975" description="Immunity-related GTPase family M protein 2">
    <location>
        <begin position="1"/>
        <end position="395"/>
    </location>
</feature>
<feature type="domain" description="IRG-type G" evidence="3">
    <location>
        <begin position="63"/>
        <end position="239"/>
    </location>
</feature>
<feature type="binding site" evidence="2">
    <location>
        <begin position="72"/>
        <end position="79"/>
    </location>
    <ligand>
        <name>GTP</name>
        <dbReference type="ChEBI" id="CHEBI:37565"/>
    </ligand>
</feature>
<feature type="binding site" evidence="2">
    <location>
        <begin position="97"/>
        <end position="101"/>
    </location>
    <ligand>
        <name>GTP</name>
        <dbReference type="ChEBI" id="CHEBI:37565"/>
    </ligand>
</feature>
<feature type="binding site" evidence="2">
    <location>
        <begin position="179"/>
        <end position="181"/>
    </location>
    <ligand>
        <name>GTP</name>
        <dbReference type="ChEBI" id="CHEBI:37565"/>
    </ligand>
</feature>
<feature type="mutagenesis site" description="Abolished GTPase activity, preventing ability to mediate host resistance to acute infection by T.gondii." evidence="7">
    <original>M</original>
    <variation>A</variation>
    <location>
        <position position="77"/>
    </location>
</feature>
<feature type="mutagenesis site" description="Abolished polyubiquitination; when associated with A-269, A-314, A-316 and A-379." evidence="7">
    <original>K</original>
    <variation>A</variation>
    <location>
        <position position="92"/>
    </location>
</feature>
<feature type="mutagenesis site" description="Abolished polyubiquitination; when associated with A-92, A-314, A-316 and A-379." evidence="7">
    <original>K</original>
    <variation>A</variation>
    <location>
        <position position="269"/>
    </location>
</feature>
<feature type="mutagenesis site" description="Abolished polyubiquitination; when associated with A-92, A-269, A-316 and A-379." evidence="7">
    <original>K</original>
    <variation>A</variation>
    <location>
        <position position="314"/>
    </location>
</feature>
<feature type="mutagenesis site" description="Abolished polyubiquitination; when associated with A-92, A-269, A-314 and A-379." evidence="7">
    <original>K</original>
    <variation>A</variation>
    <location>
        <position position="316"/>
    </location>
</feature>
<feature type="mutagenesis site" description="Does not affect localization to parasitophorous vacuole membranes or Golgi apparatus." evidence="7">
    <original>C</original>
    <variation>A</variation>
    <location>
        <position position="357"/>
    </location>
</feature>
<feature type="mutagenesis site" description="Abolished localization to parasitophorous vacuole membranes or Golgi apparatus." evidence="7">
    <original>C</original>
    <variation>A</variation>
    <location>
        <position position="358"/>
    </location>
</feature>
<feature type="mutagenesis site" description="Abolished polyubiquitination; when associated with A-92, A-269, A-314 and A-316." evidence="7">
    <original>K</original>
    <variation>A</variation>
    <location>
        <position position="379"/>
    </location>
</feature>
<feature type="sequence conflict" description="In Ref. 2; BAE42632." evidence="11" ref="2">
    <original>V</original>
    <variation>D</variation>
    <location>
        <position position="10"/>
    </location>
</feature>
<feature type="sequence conflict" description="In Ref. 2; BAE42632." evidence="11" ref="2">
    <original>N</original>
    <variation>D</variation>
    <location>
        <position position="27"/>
    </location>
</feature>
<feature type="sequence conflict" description="In Ref. 2; BAE42632." evidence="11" ref="2">
    <original>I</original>
    <variation>T</variation>
    <location>
        <position position="143"/>
    </location>
</feature>
<feature type="sequence conflict" description="In Ref. 2; BAE42632." evidence="11" ref="2">
    <original>L</original>
    <variation>S</variation>
    <location>
        <position position="157"/>
    </location>
</feature>
<feature type="sequence conflict" description="In Ref. 2; BAE42632." evidence="11" ref="2">
    <original>V</original>
    <variation>I</variation>
    <location>
        <position position="175"/>
    </location>
</feature>
<feature type="sequence conflict" description="In Ref. 2; BAE42632." evidence="11" ref="2">
    <original>S</original>
    <variation>N</variation>
    <location>
        <position position="205"/>
    </location>
</feature>
<feature type="sequence conflict" description="In Ref. 2; BAE42632." evidence="11" ref="2">
    <original>H</original>
    <variation>P</variation>
    <location>
        <position position="214"/>
    </location>
</feature>
<feature type="sequence conflict" description="In Ref. 2; BAE38144." evidence="11" ref="2">
    <original>H</original>
    <variation>R</variation>
    <location>
        <position position="246"/>
    </location>
</feature>
<feature type="sequence conflict" description="In Ref. 2; BAE42632." evidence="11" ref="2">
    <original>A</original>
    <variation>S</variation>
    <location>
        <position position="310"/>
    </location>
</feature>
<feature type="sequence conflict" description="In Ref. 2; BAE42632." evidence="11" ref="2">
    <original>T</original>
    <variation>S</variation>
    <location>
        <position position="360"/>
    </location>
</feature>
<feature type="sequence conflict" description="In Ref. 2; BAE31558/BAE31890." evidence="11" ref="2">
    <original>S</original>
    <variation>P</variation>
    <location>
        <position position="391"/>
    </location>
</feature>
<sequence length="395" mass="45205">MEEAVESPEVKEFEYFSDAVFIPKDGNTLSVGVIKRIETAVKEGEVVKVVSIVKEIIQNVSRNKIKIAVTGDSGNGMSSFINALRLIGHEEKDSAPTGVVRTTQKPTCYFSSHFPYVELWDLPGLGATAQSVESYLEEMQISIYDLIIIVASEQFSLNHVKLAITMQRMRKRFYVVWTKLDRDLSTSTFPEPQLLQSIQRNIRDSLQKEKVKEHPMFLVSVFKPESHDFPKLRETLQKDLPVIKYHGLVETLYQVCEKTVNERVESIKKSIDEDNLHTEFGISDPGNAIEIRKAFQKTFGLDDISLHLVALEMKNKHFNTSMESQETQRYQQDDWVLARLYRTGTRVGSIGFDYMKCCFTSHHSRCKQQKDILDETAAKAKEVLLKILRLSIPHP</sequence>
<proteinExistence type="evidence at protein level"/>
<reference key="1">
    <citation type="journal article" date="1998" name="J. Immunol.">
        <title>Two families of GTPases dominate the complex cellular response to IFN-gamma.</title>
        <authorList>
            <person name="Boehm U."/>
            <person name="Guethlein L."/>
            <person name="Klamp T."/>
            <person name="Ozbek K."/>
            <person name="Schaub A."/>
            <person name="Fuetterer A."/>
            <person name="Pfeffer K."/>
            <person name="Howard J.C."/>
        </authorList>
    </citation>
    <scope>NUCLEOTIDE SEQUENCE [MRNA]</scope>
</reference>
<reference key="2">
    <citation type="journal article" date="2005" name="Science">
        <title>The transcriptional landscape of the mammalian genome.</title>
        <authorList>
            <person name="Carninci P."/>
            <person name="Kasukawa T."/>
            <person name="Katayama S."/>
            <person name="Gough J."/>
            <person name="Frith M.C."/>
            <person name="Maeda N."/>
            <person name="Oyama R."/>
            <person name="Ravasi T."/>
            <person name="Lenhard B."/>
            <person name="Wells C."/>
            <person name="Kodzius R."/>
            <person name="Shimokawa K."/>
            <person name="Bajic V.B."/>
            <person name="Brenner S.E."/>
            <person name="Batalov S."/>
            <person name="Forrest A.R."/>
            <person name="Zavolan M."/>
            <person name="Davis M.J."/>
            <person name="Wilming L.G."/>
            <person name="Aidinis V."/>
            <person name="Allen J.E."/>
            <person name="Ambesi-Impiombato A."/>
            <person name="Apweiler R."/>
            <person name="Aturaliya R.N."/>
            <person name="Bailey T.L."/>
            <person name="Bansal M."/>
            <person name="Baxter L."/>
            <person name="Beisel K.W."/>
            <person name="Bersano T."/>
            <person name="Bono H."/>
            <person name="Chalk A.M."/>
            <person name="Chiu K.P."/>
            <person name="Choudhary V."/>
            <person name="Christoffels A."/>
            <person name="Clutterbuck D.R."/>
            <person name="Crowe M.L."/>
            <person name="Dalla E."/>
            <person name="Dalrymple B.P."/>
            <person name="de Bono B."/>
            <person name="Della Gatta G."/>
            <person name="di Bernardo D."/>
            <person name="Down T."/>
            <person name="Engstrom P."/>
            <person name="Fagiolini M."/>
            <person name="Faulkner G."/>
            <person name="Fletcher C.F."/>
            <person name="Fukushima T."/>
            <person name="Furuno M."/>
            <person name="Futaki S."/>
            <person name="Gariboldi M."/>
            <person name="Georgii-Hemming P."/>
            <person name="Gingeras T.R."/>
            <person name="Gojobori T."/>
            <person name="Green R.E."/>
            <person name="Gustincich S."/>
            <person name="Harbers M."/>
            <person name="Hayashi Y."/>
            <person name="Hensch T.K."/>
            <person name="Hirokawa N."/>
            <person name="Hill D."/>
            <person name="Huminiecki L."/>
            <person name="Iacono M."/>
            <person name="Ikeo K."/>
            <person name="Iwama A."/>
            <person name="Ishikawa T."/>
            <person name="Jakt M."/>
            <person name="Kanapin A."/>
            <person name="Katoh M."/>
            <person name="Kawasawa Y."/>
            <person name="Kelso J."/>
            <person name="Kitamura H."/>
            <person name="Kitano H."/>
            <person name="Kollias G."/>
            <person name="Krishnan S.P."/>
            <person name="Kruger A."/>
            <person name="Kummerfeld S.K."/>
            <person name="Kurochkin I.V."/>
            <person name="Lareau L.F."/>
            <person name="Lazarevic D."/>
            <person name="Lipovich L."/>
            <person name="Liu J."/>
            <person name="Liuni S."/>
            <person name="McWilliam S."/>
            <person name="Madan Babu M."/>
            <person name="Madera M."/>
            <person name="Marchionni L."/>
            <person name="Matsuda H."/>
            <person name="Matsuzawa S."/>
            <person name="Miki H."/>
            <person name="Mignone F."/>
            <person name="Miyake S."/>
            <person name="Morris K."/>
            <person name="Mottagui-Tabar S."/>
            <person name="Mulder N."/>
            <person name="Nakano N."/>
            <person name="Nakauchi H."/>
            <person name="Ng P."/>
            <person name="Nilsson R."/>
            <person name="Nishiguchi S."/>
            <person name="Nishikawa S."/>
            <person name="Nori F."/>
            <person name="Ohara O."/>
            <person name="Okazaki Y."/>
            <person name="Orlando V."/>
            <person name="Pang K.C."/>
            <person name="Pavan W.J."/>
            <person name="Pavesi G."/>
            <person name="Pesole G."/>
            <person name="Petrovsky N."/>
            <person name="Piazza S."/>
            <person name="Reed J."/>
            <person name="Reid J.F."/>
            <person name="Ring B.Z."/>
            <person name="Ringwald M."/>
            <person name="Rost B."/>
            <person name="Ruan Y."/>
            <person name="Salzberg S.L."/>
            <person name="Sandelin A."/>
            <person name="Schneider C."/>
            <person name="Schoenbach C."/>
            <person name="Sekiguchi K."/>
            <person name="Semple C.A."/>
            <person name="Seno S."/>
            <person name="Sessa L."/>
            <person name="Sheng Y."/>
            <person name="Shibata Y."/>
            <person name="Shimada H."/>
            <person name="Shimada K."/>
            <person name="Silva D."/>
            <person name="Sinclair B."/>
            <person name="Sperling S."/>
            <person name="Stupka E."/>
            <person name="Sugiura K."/>
            <person name="Sultana R."/>
            <person name="Takenaka Y."/>
            <person name="Taki K."/>
            <person name="Tammoja K."/>
            <person name="Tan S.L."/>
            <person name="Tang S."/>
            <person name="Taylor M.S."/>
            <person name="Tegner J."/>
            <person name="Teichmann S.A."/>
            <person name="Ueda H.R."/>
            <person name="van Nimwegen E."/>
            <person name="Verardo R."/>
            <person name="Wei C.L."/>
            <person name="Yagi K."/>
            <person name="Yamanishi H."/>
            <person name="Zabarovsky E."/>
            <person name="Zhu S."/>
            <person name="Zimmer A."/>
            <person name="Hide W."/>
            <person name="Bult C."/>
            <person name="Grimmond S.M."/>
            <person name="Teasdale R.D."/>
            <person name="Liu E.T."/>
            <person name="Brusic V."/>
            <person name="Quackenbush J."/>
            <person name="Wahlestedt C."/>
            <person name="Mattick J.S."/>
            <person name="Hume D.A."/>
            <person name="Kai C."/>
            <person name="Sasaki D."/>
            <person name="Tomaru Y."/>
            <person name="Fukuda S."/>
            <person name="Kanamori-Katayama M."/>
            <person name="Suzuki M."/>
            <person name="Aoki J."/>
            <person name="Arakawa T."/>
            <person name="Iida J."/>
            <person name="Imamura K."/>
            <person name="Itoh M."/>
            <person name="Kato T."/>
            <person name="Kawaji H."/>
            <person name="Kawagashira N."/>
            <person name="Kawashima T."/>
            <person name="Kojima M."/>
            <person name="Kondo S."/>
            <person name="Konno H."/>
            <person name="Nakano K."/>
            <person name="Ninomiya N."/>
            <person name="Nishio T."/>
            <person name="Okada M."/>
            <person name="Plessy C."/>
            <person name="Shibata K."/>
            <person name="Shiraki T."/>
            <person name="Suzuki S."/>
            <person name="Tagami M."/>
            <person name="Waki K."/>
            <person name="Watahiki A."/>
            <person name="Okamura-Oho Y."/>
            <person name="Suzuki H."/>
            <person name="Kawai J."/>
            <person name="Hayashizaki Y."/>
        </authorList>
    </citation>
    <scope>NUCLEOTIDE SEQUENCE [LARGE SCALE MRNA]</scope>
    <source>
        <strain>C57BL/6J</strain>
        <strain>NOD</strain>
        <tissue>Bone marrow</tissue>
        <tissue>Heart</tissue>
        <tissue>Spleen</tissue>
    </source>
</reference>
<reference key="3">
    <citation type="journal article" date="2009" name="PLoS Biol.">
        <title>Lineage-specific biology revealed by a finished genome assembly of the mouse.</title>
        <authorList>
            <person name="Church D.M."/>
            <person name="Goodstadt L."/>
            <person name="Hillier L.W."/>
            <person name="Zody M.C."/>
            <person name="Goldstein S."/>
            <person name="She X."/>
            <person name="Bult C.J."/>
            <person name="Agarwala R."/>
            <person name="Cherry J.L."/>
            <person name="DiCuccio M."/>
            <person name="Hlavina W."/>
            <person name="Kapustin Y."/>
            <person name="Meric P."/>
            <person name="Maglott D."/>
            <person name="Birtle Z."/>
            <person name="Marques A.C."/>
            <person name="Graves T."/>
            <person name="Zhou S."/>
            <person name="Teague B."/>
            <person name="Potamousis K."/>
            <person name="Churas C."/>
            <person name="Place M."/>
            <person name="Herschleb J."/>
            <person name="Runnheim R."/>
            <person name="Forrest D."/>
            <person name="Amos-Landgraf J."/>
            <person name="Schwartz D.C."/>
            <person name="Cheng Z."/>
            <person name="Lindblad-Toh K."/>
            <person name="Eichler E.E."/>
            <person name="Ponting C.P."/>
        </authorList>
    </citation>
    <scope>NUCLEOTIDE SEQUENCE [LARGE SCALE GENOMIC DNA]</scope>
    <source>
        <strain>C57BL/6J</strain>
    </source>
</reference>
<reference key="4">
    <citation type="journal article" date="2012" name="Funct. Integr. Genomics">
        <title>Comparative genomic analysis of eutherian interferon-gamma-inducible GTPases.</title>
        <authorList>
            <person name="Premzl M."/>
        </authorList>
    </citation>
    <scope>IDENTIFICATION</scope>
    <scope>GENOMIC ANALYSIS</scope>
</reference>
<reference key="5">
    <citation type="journal article" date="2009" name="Immunity">
        <title>The phagosomal proteome in interferon-gamma-activated macrophages.</title>
        <authorList>
            <person name="Trost M."/>
            <person name="English L."/>
            <person name="Lemieux S."/>
            <person name="Courcelles M."/>
            <person name="Desjardins M."/>
            <person name="Thibault P."/>
        </authorList>
    </citation>
    <scope>IDENTIFICATION BY MASS SPECTROMETRY [LARGE SCALE ANALYSIS]</scope>
</reference>
<reference key="6">
    <citation type="journal article" date="2007" name="J. Immunol.">
        <title>The p47 GTPases Iigp2 and Irgb10 regulate innate immunity and inflammation to murine Chlamydia psittaci infection.</title>
        <authorList>
            <person name="Miyairi I."/>
            <person name="Tatireddigari V.R."/>
            <person name="Mahdi O.S."/>
            <person name="Rose L.A."/>
            <person name="Belland R.J."/>
            <person name="Lu L."/>
            <person name="Williams R.W."/>
            <person name="Byrne G.I."/>
        </authorList>
    </citation>
    <scope>FUNCTION</scope>
</reference>
<reference key="7">
    <citation type="journal article" date="2020" name="EMBO Rep.">
        <title>Irgm2 and Gate-16 cooperatively dampen Gram-negative bacteria-induced caspase-11 response.</title>
        <authorList>
            <person name="Eren E."/>
            <person name="Planes R."/>
            <person name="Bagayoko S."/>
            <person name="Bordignon P.J."/>
            <person name="Chaoui K."/>
            <person name="Hessel A."/>
            <person name="Santoni K."/>
            <person name="Pinilla M."/>
            <person name="Lagrange B."/>
            <person name="Burlet-Schiltz O."/>
            <person name="Howard J.C."/>
            <person name="Henry T."/>
            <person name="Yamamoto M."/>
            <person name="Meunier E."/>
        </authorList>
    </citation>
    <scope>FUNCTION</scope>
</reference>
<reference key="8">
    <citation type="journal article" date="2020" name="EMBO Rep.">
        <title>Dynamin-related Irgm proteins modulate LPS-induced caspase-11 activation and septic shock.</title>
        <authorList>
            <person name="Finethy R."/>
            <person name="Dockterman J."/>
            <person name="Kutsch M."/>
            <person name="Orench-Rivera N."/>
            <person name="Wallace G.D."/>
            <person name="Piro A.S."/>
            <person name="Luoma S."/>
            <person name="Haldar A.K."/>
            <person name="Hwang S."/>
            <person name="Martinez J."/>
            <person name="Kuehn M.J."/>
            <person name="Taylor G.A."/>
            <person name="Coers J."/>
        </authorList>
    </citation>
    <scope>FUNCTION</scope>
    <scope>DISRUPTION PHENOTYPE</scope>
</reference>
<reference key="9">
    <citation type="journal article" date="2021" name="Infect. Immun.">
        <title>Murine Irgm paralogs regulate nonredundant functions to execute host defense to Toxoplasma gondii.</title>
        <authorList>
            <person name="Dockterman J."/>
            <person name="Fee B.E."/>
            <person name="Taylor G.A."/>
            <person name="Coers J."/>
        </authorList>
    </citation>
    <scope>FUNCTION</scope>
    <scope>DISRUPTION PHENOTYPE</scope>
</reference>
<reference key="10">
    <citation type="journal article" date="2021" name="Life. Sci Alliance">
        <title>Cell-autonomous Toxoplasma killing program requires Irgm2 but not its microbe vacuolar localization.</title>
        <authorList>
            <person name="Pradipta A."/>
            <person name="Sasai M."/>
            <person name="Motani K."/>
            <person name="Ma J.S."/>
            <person name="Lee Y."/>
            <person name="Kosako H."/>
            <person name="Yamamoto M."/>
        </authorList>
    </citation>
    <scope>FUNCTION</scope>
    <scope>CATALYTIC ACTIVITY</scope>
    <scope>SUBCELLULAR LOCATION</scope>
    <scope>DISRUPTION PHENOTYPE</scope>
    <scope>UBIQUITINATION</scope>
    <scope>MUTAGENESIS OF MET-77; LYS-92; LYS-269; LYS-314; LYS-316; CYS-357; CYS-358 AND LYS-379</scope>
</reference>
<reference key="11">
    <citation type="journal article" date="2023" name="Infect. Immun.">
        <title>Differential requirement for IRGM proteins during Tuberculosis infection in mice.</title>
        <authorList>
            <person name="Wilburn K.M."/>
            <person name="Meade R.K."/>
            <person name="Heckenberg E.M."/>
            <person name="Dockterman J."/>
            <person name="Coers J."/>
            <person name="Sassetti C.M."/>
            <person name="Olive A.J."/>
            <person name="Smith C.M."/>
        </authorList>
    </citation>
    <scope>DISRUPTION PHENOTYPE</scope>
</reference>
<organism>
    <name type="scientific">Mus musculus</name>
    <name type="common">Mouse</name>
    <dbReference type="NCBI Taxonomy" id="10090"/>
    <lineage>
        <taxon>Eukaryota</taxon>
        <taxon>Metazoa</taxon>
        <taxon>Chordata</taxon>
        <taxon>Craniata</taxon>
        <taxon>Vertebrata</taxon>
        <taxon>Euteleostomi</taxon>
        <taxon>Mammalia</taxon>
        <taxon>Eutheria</taxon>
        <taxon>Euarchontoglires</taxon>
        <taxon>Glires</taxon>
        <taxon>Rodentia</taxon>
        <taxon>Myomorpha</taxon>
        <taxon>Muroidea</taxon>
        <taxon>Muridae</taxon>
        <taxon>Murinae</taxon>
        <taxon>Mus</taxon>
        <taxon>Mus</taxon>
    </lineage>
</organism>
<accession>A0A140LIF8</accession>
<accession>E9PVI2</accession>
<accession>Q3TAN6</accession>
<accession>Q3TNE5</accession>
<accession>Q3U635</accession>
<accession>Q9Z1M2</accession>
<keyword id="KW-0963">Cytoplasm</keyword>
<keyword id="KW-0968">Cytoplasmic vesicle</keyword>
<keyword id="KW-0333">Golgi apparatus</keyword>
<keyword id="KW-0342">GTP-binding</keyword>
<keyword id="KW-0378">Hydrolase</keyword>
<keyword id="KW-0391">Immunity</keyword>
<keyword id="KW-0399">Innate immunity</keyword>
<keyword id="KW-0472">Membrane</keyword>
<keyword id="KW-0547">Nucleotide-binding</keyword>
<keyword id="KW-1185">Reference proteome</keyword>
<keyword id="KW-0832">Ubl conjugation</keyword>